<gene>
    <name type="primary">slc35b1</name>
    <name type="ORF">zgc:92284</name>
</gene>
<sequence length="329" mass="36812">MAAGKAASKPSLWQNERVRFAVCFCGVFVCYFYYGILQETITRADYTHAGKKEKFRYATTLVFIQCIINAAFARLLIQFFEGSKQDHTRSWLYGLCSLSYLGAMVSSNSALQYVNYPTQVLGKSCKPIPVMILGVTILRKKYPMAKYLCVFLIVGGVALFLYKPNKGSSTSDEHVFGFGEMLLLLSLTLDGLTGVVQDHMRGRFQTGANHMMLNVNMWSTLVLGIAVLWSGEVWEFLAFTDRYPSIIYNILLFGITSALGQTFIFMTVVYFGPLTCSIVTTTRKFFTILGSVLLFGNVISHMQWFGTILVFLGLGLDAKFGKSPKKTTH</sequence>
<feature type="chain" id="PRO_0000213370" description="Solute carrier family 35 member B1">
    <location>
        <begin position="1"/>
        <end position="329"/>
    </location>
</feature>
<feature type="transmembrane region" description="Helical" evidence="2">
    <location>
        <begin position="21"/>
        <end position="41"/>
    </location>
</feature>
<feature type="transmembrane region" description="Helical" evidence="2">
    <location>
        <begin position="60"/>
        <end position="80"/>
    </location>
</feature>
<feature type="transmembrane region" description="Helical" evidence="2">
    <location>
        <begin position="91"/>
        <end position="111"/>
    </location>
</feature>
<feature type="transmembrane region" description="Helical" evidence="2">
    <location>
        <begin position="142"/>
        <end position="162"/>
    </location>
</feature>
<feature type="transmembrane region" description="Helical" evidence="2">
    <location>
        <begin position="175"/>
        <end position="195"/>
    </location>
</feature>
<feature type="transmembrane region" description="Helical" evidence="2">
    <location>
        <begin position="220"/>
        <end position="240"/>
    </location>
</feature>
<feature type="transmembrane region" description="Helical" evidence="2">
    <location>
        <begin position="250"/>
        <end position="270"/>
    </location>
</feature>
<feature type="transmembrane region" description="Helical" evidence="2">
    <location>
        <begin position="292"/>
        <end position="312"/>
    </location>
</feature>
<feature type="short sequence motif" description="Di-lysine motif">
    <location>
        <begin position="325"/>
        <end position="329"/>
    </location>
</feature>
<protein>
    <recommendedName>
        <fullName>Solute carrier family 35 member B1</fullName>
    </recommendedName>
</protein>
<dbReference type="EMBL" id="BC081637">
    <property type="protein sequence ID" value="AAH81637.1"/>
    <property type="molecule type" value="mRNA"/>
</dbReference>
<dbReference type="RefSeq" id="NP_001004583.1">
    <property type="nucleotide sequence ID" value="NM_001004583.1"/>
</dbReference>
<dbReference type="SMR" id="Q66HX0"/>
<dbReference type="FunCoup" id="Q66HX0">
    <property type="interactions" value="1868"/>
</dbReference>
<dbReference type="STRING" id="7955.ENSDARP00000055721"/>
<dbReference type="PaxDb" id="7955-ENSDARP00000055721"/>
<dbReference type="Ensembl" id="ENSDART00000055722">
    <property type="protein sequence ID" value="ENSDARP00000055721"/>
    <property type="gene ID" value="ENSDARG00000038213"/>
</dbReference>
<dbReference type="GeneID" id="447844"/>
<dbReference type="KEGG" id="dre:447844"/>
<dbReference type="AGR" id="ZFIN:ZDB-GENE-040912-148"/>
<dbReference type="CTD" id="10237"/>
<dbReference type="ZFIN" id="ZDB-GENE-040912-148">
    <property type="gene designation" value="slc35b1"/>
</dbReference>
<dbReference type="eggNOG" id="KOG1580">
    <property type="taxonomic scope" value="Eukaryota"/>
</dbReference>
<dbReference type="HOGENOM" id="CLU_036019_1_0_1"/>
<dbReference type="InParanoid" id="Q66HX0"/>
<dbReference type="OMA" id="CGAIGQV"/>
<dbReference type="OrthoDB" id="78344at2759"/>
<dbReference type="PhylomeDB" id="Q66HX0"/>
<dbReference type="TreeFam" id="TF105967"/>
<dbReference type="PRO" id="PR:Q66HX0"/>
<dbReference type="Proteomes" id="UP000000437">
    <property type="component" value="Chromosome 3"/>
</dbReference>
<dbReference type="Bgee" id="ENSDARG00000038213">
    <property type="expression patterns" value="Expressed in tail and 27 other cell types or tissues"/>
</dbReference>
<dbReference type="GO" id="GO:0005789">
    <property type="term" value="C:endoplasmic reticulum membrane"/>
    <property type="evidence" value="ECO:0000318"/>
    <property type="project" value="GO_Central"/>
</dbReference>
<dbReference type="GO" id="GO:0000139">
    <property type="term" value="C:Golgi membrane"/>
    <property type="evidence" value="ECO:0000318"/>
    <property type="project" value="GO_Central"/>
</dbReference>
<dbReference type="GO" id="GO:0005459">
    <property type="term" value="F:UDP-galactose transmembrane transporter activity"/>
    <property type="evidence" value="ECO:0000318"/>
    <property type="project" value="GO_Central"/>
</dbReference>
<dbReference type="GO" id="GO:0005460">
    <property type="term" value="F:UDP-glucose transmembrane transporter activity"/>
    <property type="evidence" value="ECO:0000318"/>
    <property type="project" value="GO_Central"/>
</dbReference>
<dbReference type="GO" id="GO:0072334">
    <property type="term" value="P:UDP-galactose transmembrane transport"/>
    <property type="evidence" value="ECO:0000318"/>
    <property type="project" value="GO_Central"/>
</dbReference>
<dbReference type="Gene3D" id="1.10.3730.20">
    <property type="match status" value="1"/>
</dbReference>
<dbReference type="InterPro" id="IPR013657">
    <property type="entry name" value="SCL35B1-4/HUT1"/>
</dbReference>
<dbReference type="PANTHER" id="PTHR10778">
    <property type="entry name" value="SOLUTE CARRIER FAMILY 35 MEMBER B"/>
    <property type="match status" value="1"/>
</dbReference>
<dbReference type="PANTHER" id="PTHR10778:SF10">
    <property type="entry name" value="SOLUTE CARRIER FAMILY 35 MEMBER B1"/>
    <property type="match status" value="1"/>
</dbReference>
<dbReference type="Pfam" id="PF08449">
    <property type="entry name" value="UAA"/>
    <property type="match status" value="1"/>
</dbReference>
<dbReference type="SUPFAM" id="SSF103481">
    <property type="entry name" value="Multidrug resistance efflux transporter EmrE"/>
    <property type="match status" value="2"/>
</dbReference>
<accession>Q66HX0</accession>
<organism>
    <name type="scientific">Danio rerio</name>
    <name type="common">Zebrafish</name>
    <name type="synonym">Brachydanio rerio</name>
    <dbReference type="NCBI Taxonomy" id="7955"/>
    <lineage>
        <taxon>Eukaryota</taxon>
        <taxon>Metazoa</taxon>
        <taxon>Chordata</taxon>
        <taxon>Craniata</taxon>
        <taxon>Vertebrata</taxon>
        <taxon>Euteleostomi</taxon>
        <taxon>Actinopterygii</taxon>
        <taxon>Neopterygii</taxon>
        <taxon>Teleostei</taxon>
        <taxon>Ostariophysi</taxon>
        <taxon>Cypriniformes</taxon>
        <taxon>Danionidae</taxon>
        <taxon>Danioninae</taxon>
        <taxon>Danio</taxon>
    </lineage>
</organism>
<evidence type="ECO:0000250" key="1"/>
<evidence type="ECO:0000255" key="2"/>
<evidence type="ECO:0000305" key="3"/>
<keyword id="KW-0256">Endoplasmic reticulum</keyword>
<keyword id="KW-0472">Membrane</keyword>
<keyword id="KW-1185">Reference proteome</keyword>
<keyword id="KW-0762">Sugar transport</keyword>
<keyword id="KW-0812">Transmembrane</keyword>
<keyword id="KW-1133">Transmembrane helix</keyword>
<keyword id="KW-0813">Transport</keyword>
<name>S35B1_DANRE</name>
<comment type="function">
    <text evidence="1">Probable sugar transporter.</text>
</comment>
<comment type="subcellular location">
    <subcellularLocation>
        <location evidence="3">Endoplasmic reticulum membrane</location>
        <topology evidence="3">Multi-pass membrane protein</topology>
    </subcellularLocation>
</comment>
<comment type="domain">
    <text evidence="1">The di-lysine motif confers endoplasmic reticulum localization for type I membrane proteins.</text>
</comment>
<comment type="similarity">
    <text evidence="3">Belongs to the nucleotide-sugar transporter family. SLC35B subfamily.</text>
</comment>
<reference key="1">
    <citation type="submission" date="2004-09" db="EMBL/GenBank/DDBJ databases">
        <authorList>
            <consortium name="NIH - Zebrafish Gene Collection (ZGC) project"/>
        </authorList>
    </citation>
    <scope>NUCLEOTIDE SEQUENCE [LARGE SCALE MRNA]</scope>
</reference>
<proteinExistence type="evidence at transcript level"/>